<dbReference type="EC" id="5.1.3.20" evidence="1"/>
<dbReference type="EMBL" id="AM406670">
    <property type="protein sequence ID" value="CAL96180.1"/>
    <property type="molecule type" value="Genomic_DNA"/>
</dbReference>
<dbReference type="RefSeq" id="WP_011767286.1">
    <property type="nucleotide sequence ID" value="NC_008702.1"/>
</dbReference>
<dbReference type="SMR" id="A1KBH4"/>
<dbReference type="STRING" id="62928.azo3564"/>
<dbReference type="KEGG" id="aoa:dqs_3707"/>
<dbReference type="KEGG" id="azo:azo3564"/>
<dbReference type="eggNOG" id="COG0451">
    <property type="taxonomic scope" value="Bacteria"/>
</dbReference>
<dbReference type="HOGENOM" id="CLU_007383_1_3_4"/>
<dbReference type="OrthoDB" id="9803010at2"/>
<dbReference type="UniPathway" id="UPA00356">
    <property type="reaction ID" value="UER00440"/>
</dbReference>
<dbReference type="Proteomes" id="UP000002588">
    <property type="component" value="Chromosome"/>
</dbReference>
<dbReference type="GO" id="GO:0008712">
    <property type="term" value="F:ADP-glyceromanno-heptose 6-epimerase activity"/>
    <property type="evidence" value="ECO:0007669"/>
    <property type="project" value="UniProtKB-UniRule"/>
</dbReference>
<dbReference type="GO" id="GO:0050661">
    <property type="term" value="F:NADP binding"/>
    <property type="evidence" value="ECO:0007669"/>
    <property type="project" value="InterPro"/>
</dbReference>
<dbReference type="GO" id="GO:0097171">
    <property type="term" value="P:ADP-L-glycero-beta-D-manno-heptose biosynthetic process"/>
    <property type="evidence" value="ECO:0007669"/>
    <property type="project" value="UniProtKB-UniPathway"/>
</dbReference>
<dbReference type="GO" id="GO:0005975">
    <property type="term" value="P:carbohydrate metabolic process"/>
    <property type="evidence" value="ECO:0007669"/>
    <property type="project" value="UniProtKB-UniRule"/>
</dbReference>
<dbReference type="CDD" id="cd05248">
    <property type="entry name" value="ADP_GME_SDR_e"/>
    <property type="match status" value="1"/>
</dbReference>
<dbReference type="Gene3D" id="3.40.50.720">
    <property type="entry name" value="NAD(P)-binding Rossmann-like Domain"/>
    <property type="match status" value="1"/>
</dbReference>
<dbReference type="Gene3D" id="3.90.25.10">
    <property type="entry name" value="UDP-galactose 4-epimerase, domain 1"/>
    <property type="match status" value="1"/>
</dbReference>
<dbReference type="HAMAP" id="MF_01601">
    <property type="entry name" value="Heptose_epimerase"/>
    <property type="match status" value="1"/>
</dbReference>
<dbReference type="InterPro" id="IPR001509">
    <property type="entry name" value="Epimerase_deHydtase"/>
</dbReference>
<dbReference type="InterPro" id="IPR011912">
    <property type="entry name" value="Heptose_epim"/>
</dbReference>
<dbReference type="InterPro" id="IPR036291">
    <property type="entry name" value="NAD(P)-bd_dom_sf"/>
</dbReference>
<dbReference type="NCBIfam" id="TIGR02197">
    <property type="entry name" value="heptose_epim"/>
    <property type="match status" value="1"/>
</dbReference>
<dbReference type="NCBIfam" id="NF008360">
    <property type="entry name" value="PRK11150.1"/>
    <property type="match status" value="1"/>
</dbReference>
<dbReference type="PANTHER" id="PTHR43103:SF3">
    <property type="entry name" value="ADP-L-GLYCERO-D-MANNO-HEPTOSE-6-EPIMERASE"/>
    <property type="match status" value="1"/>
</dbReference>
<dbReference type="PANTHER" id="PTHR43103">
    <property type="entry name" value="NUCLEOSIDE-DIPHOSPHATE-SUGAR EPIMERASE"/>
    <property type="match status" value="1"/>
</dbReference>
<dbReference type="Pfam" id="PF01370">
    <property type="entry name" value="Epimerase"/>
    <property type="match status" value="1"/>
</dbReference>
<dbReference type="SUPFAM" id="SSF51735">
    <property type="entry name" value="NAD(P)-binding Rossmann-fold domains"/>
    <property type="match status" value="1"/>
</dbReference>
<name>HLDD_AZOSB</name>
<sequence length="325" mass="36592">MIIVTGGAGFIGSNIVQGLNDRGITDILVVDDLRDGRKCLNLADADIRDYMDMDDFLARIQTGEDLGRVEAVFHEGACSSTTEWDGRFVMRVNYEYTKALLAWCTQRKIPLIYASSASVYGMGPTFREAREFEQPLNMYAYSKFLFDCHLRAQQGIESQVVGLRYFNVYGPREQHKGSMASVAYHFNNQLNESGRVRLFEGSDGYGPGEQRRDFIHVDDVVAVNLWLFDNPQVSGIYNLGTGRAQSFNDVARAAIKWFRAQGEDGGRERGGIDYIPFPDHLKGRYQSFTEADMGALRAAGYDRPFMDVETGVPAYLSWLASQDKR</sequence>
<accession>A1KBH4</accession>
<feature type="chain" id="PRO_1000069342" description="ADP-L-glycero-D-manno-heptose-6-epimerase">
    <location>
        <begin position="1"/>
        <end position="325"/>
    </location>
</feature>
<feature type="active site" description="Proton acceptor" evidence="1">
    <location>
        <position position="139"/>
    </location>
</feature>
<feature type="active site" description="Proton acceptor" evidence="1">
    <location>
        <position position="176"/>
    </location>
</feature>
<feature type="binding site" evidence="1">
    <location>
        <begin position="10"/>
        <end position="11"/>
    </location>
    <ligand>
        <name>NADP(+)</name>
        <dbReference type="ChEBI" id="CHEBI:58349"/>
    </ligand>
</feature>
<feature type="binding site" evidence="1">
    <location>
        <begin position="31"/>
        <end position="32"/>
    </location>
    <ligand>
        <name>NADP(+)</name>
        <dbReference type="ChEBI" id="CHEBI:58349"/>
    </ligand>
</feature>
<feature type="binding site" evidence="1">
    <location>
        <position position="38"/>
    </location>
    <ligand>
        <name>NADP(+)</name>
        <dbReference type="ChEBI" id="CHEBI:58349"/>
    </ligand>
</feature>
<feature type="binding site" evidence="1">
    <location>
        <begin position="75"/>
        <end position="79"/>
    </location>
    <ligand>
        <name>NADP(+)</name>
        <dbReference type="ChEBI" id="CHEBI:58349"/>
    </ligand>
</feature>
<feature type="binding site" evidence="1">
    <location>
        <position position="143"/>
    </location>
    <ligand>
        <name>NADP(+)</name>
        <dbReference type="ChEBI" id="CHEBI:58349"/>
    </ligand>
</feature>
<feature type="binding site" evidence="1">
    <location>
        <position position="167"/>
    </location>
    <ligand>
        <name>substrate</name>
    </ligand>
</feature>
<feature type="binding site" evidence="1">
    <location>
        <position position="168"/>
    </location>
    <ligand>
        <name>NADP(+)</name>
        <dbReference type="ChEBI" id="CHEBI:58349"/>
    </ligand>
</feature>
<feature type="binding site" evidence="1">
    <location>
        <position position="176"/>
    </location>
    <ligand>
        <name>NADP(+)</name>
        <dbReference type="ChEBI" id="CHEBI:58349"/>
    </ligand>
</feature>
<feature type="binding site" evidence="1">
    <location>
        <position position="178"/>
    </location>
    <ligand>
        <name>substrate</name>
    </ligand>
</feature>
<feature type="binding site" evidence="1">
    <location>
        <position position="185"/>
    </location>
    <ligand>
        <name>substrate</name>
    </ligand>
</feature>
<feature type="binding site" evidence="1">
    <location>
        <begin position="199"/>
        <end position="202"/>
    </location>
    <ligand>
        <name>substrate</name>
    </ligand>
</feature>
<feature type="binding site" evidence="1">
    <location>
        <position position="212"/>
    </location>
    <ligand>
        <name>substrate</name>
    </ligand>
</feature>
<feature type="binding site" evidence="1">
    <location>
        <position position="285"/>
    </location>
    <ligand>
        <name>substrate</name>
    </ligand>
</feature>
<comment type="function">
    <text evidence="1">Catalyzes the interconversion between ADP-D-glycero-beta-D-manno-heptose and ADP-L-glycero-beta-D-manno-heptose via an epimerization at carbon 6 of the heptose.</text>
</comment>
<comment type="catalytic activity">
    <reaction evidence="1">
        <text>ADP-D-glycero-beta-D-manno-heptose = ADP-L-glycero-beta-D-manno-heptose</text>
        <dbReference type="Rhea" id="RHEA:17577"/>
        <dbReference type="ChEBI" id="CHEBI:59967"/>
        <dbReference type="ChEBI" id="CHEBI:61506"/>
        <dbReference type="EC" id="5.1.3.20"/>
    </reaction>
</comment>
<comment type="cofactor">
    <cofactor evidence="1">
        <name>NADP(+)</name>
        <dbReference type="ChEBI" id="CHEBI:58349"/>
    </cofactor>
    <text evidence="1">Binds 1 NADP(+) per subunit.</text>
</comment>
<comment type="pathway">
    <text evidence="1">Nucleotide-sugar biosynthesis; ADP-L-glycero-beta-D-manno-heptose biosynthesis; ADP-L-glycero-beta-D-manno-heptose from D-glycero-beta-D-manno-heptose 7-phosphate: step 4/4.</text>
</comment>
<comment type="subunit">
    <text evidence="1">Homopentamer.</text>
</comment>
<comment type="domain">
    <text evidence="1">Contains a large N-terminal NADP-binding domain, and a smaller C-terminal substrate-binding domain.</text>
</comment>
<comment type="similarity">
    <text evidence="1">Belongs to the NAD(P)-dependent epimerase/dehydratase family. HldD subfamily.</text>
</comment>
<protein>
    <recommendedName>
        <fullName evidence="1">ADP-L-glycero-D-manno-heptose-6-epimerase</fullName>
        <ecNumber evidence="1">5.1.3.20</ecNumber>
    </recommendedName>
    <alternativeName>
        <fullName evidence="1">ADP-L-glycero-beta-D-manno-heptose-6-epimerase</fullName>
        <shortName evidence="1">ADP-glyceromanno-heptose 6-epimerase</shortName>
        <shortName evidence="1">ADP-hep 6-epimerase</shortName>
        <shortName evidence="1">AGME</shortName>
    </alternativeName>
</protein>
<organism>
    <name type="scientific">Azoarcus sp. (strain BH72)</name>
    <dbReference type="NCBI Taxonomy" id="418699"/>
    <lineage>
        <taxon>Bacteria</taxon>
        <taxon>Pseudomonadati</taxon>
        <taxon>Pseudomonadota</taxon>
        <taxon>Betaproteobacteria</taxon>
        <taxon>Rhodocyclales</taxon>
        <taxon>Zoogloeaceae</taxon>
        <taxon>Azoarcus</taxon>
    </lineage>
</organism>
<reference key="1">
    <citation type="journal article" date="2006" name="Nat. Biotechnol.">
        <title>Complete genome of the mutualistic, N2-fixing grass endophyte Azoarcus sp. strain BH72.</title>
        <authorList>
            <person name="Krause A."/>
            <person name="Ramakumar A."/>
            <person name="Bartels D."/>
            <person name="Battistoni F."/>
            <person name="Bekel T."/>
            <person name="Boch J."/>
            <person name="Boehm M."/>
            <person name="Friedrich F."/>
            <person name="Hurek T."/>
            <person name="Krause L."/>
            <person name="Linke B."/>
            <person name="McHardy A.C."/>
            <person name="Sarkar A."/>
            <person name="Schneiker S."/>
            <person name="Syed A.A."/>
            <person name="Thauer R."/>
            <person name="Vorhoelter F.-J."/>
            <person name="Weidner S."/>
            <person name="Puehler A."/>
            <person name="Reinhold-Hurek B."/>
            <person name="Kaiser O."/>
            <person name="Goesmann A."/>
        </authorList>
    </citation>
    <scope>NUCLEOTIDE SEQUENCE [LARGE SCALE GENOMIC DNA]</scope>
    <source>
        <strain>BH72</strain>
    </source>
</reference>
<proteinExistence type="inferred from homology"/>
<keyword id="KW-0119">Carbohydrate metabolism</keyword>
<keyword id="KW-0413">Isomerase</keyword>
<keyword id="KW-0521">NADP</keyword>
<keyword id="KW-1185">Reference proteome</keyword>
<evidence type="ECO:0000255" key="1">
    <source>
        <dbReference type="HAMAP-Rule" id="MF_01601"/>
    </source>
</evidence>
<gene>
    <name evidence="1" type="primary">hldD</name>
    <name type="ordered locus">azo3564</name>
</gene>